<sequence>MQIVETTNEGLKRAYTVTIPAADIAARVEGEIKKIAPQVRMPGFRPGKVPANLVRKMHGPALHQEALQTTIREAMDKLVADNKLRPAMQPAVSLGEGYDEGKDAELTVELEVLPQIEAPSLDGLKLEKLVVPVTEAEVDEAVARIGQGQKSFTDAKKGAKAKDGDQIIIDFLGKVDGVAFEGGAAEDTPLELGAGRFIPGFEEQLVGVKVGDEKTITVTFPEDYPAENLKGKEATFDITVKAVKNAGEFEANDEFAKMLGLESLEQLKTLLRGQLEQETAGLTRTQMKRALLDQLAAGHDFAVPPSMVEAEFEQIWAQLQQEAQREENPEEALKEIEAEKDDYRKIAERRVRLGLLLSEIGQANGVQVTSQEMEMLIRQAAQQYREQDRQRFVDYVRSEPLAAAQLRAPLYEDKVVDFLFDKAEVTEREVTREELQAAIEAEEGAAAEAKPAKKAPAKKKAAKEEAPAEEAAAEEKPKKAAPKKKAAAADEAPAAEEAPAAKKKAPAKKKAEG</sequence>
<gene>
    <name evidence="1" type="primary">tig</name>
    <name type="ordered locus">Saro_3059</name>
</gene>
<accession>Q2G3S9</accession>
<proteinExistence type="inferred from homology"/>
<keyword id="KW-0131">Cell cycle</keyword>
<keyword id="KW-0132">Cell division</keyword>
<keyword id="KW-0143">Chaperone</keyword>
<keyword id="KW-0963">Cytoplasm</keyword>
<keyword id="KW-0413">Isomerase</keyword>
<keyword id="KW-1185">Reference proteome</keyword>
<keyword id="KW-0697">Rotamase</keyword>
<reference key="1">
    <citation type="submission" date="2006-01" db="EMBL/GenBank/DDBJ databases">
        <title>Complete sequence of Novosphingobium aromaticivorans DSM 12444.</title>
        <authorList>
            <consortium name="US DOE Joint Genome Institute"/>
            <person name="Copeland A."/>
            <person name="Lucas S."/>
            <person name="Lapidus A."/>
            <person name="Barry K."/>
            <person name="Detter J.C."/>
            <person name="Glavina T."/>
            <person name="Hammon N."/>
            <person name="Israni S."/>
            <person name="Pitluck S."/>
            <person name="Chain P."/>
            <person name="Malfatti S."/>
            <person name="Shin M."/>
            <person name="Vergez L."/>
            <person name="Schmutz J."/>
            <person name="Larimer F."/>
            <person name="Land M."/>
            <person name="Kyrpides N."/>
            <person name="Ivanova N."/>
            <person name="Fredrickson J."/>
            <person name="Balkwill D."/>
            <person name="Romine M.F."/>
            <person name="Richardson P."/>
        </authorList>
    </citation>
    <scope>NUCLEOTIDE SEQUENCE [LARGE SCALE GENOMIC DNA]</scope>
    <source>
        <strain>ATCC 700278 / DSM 12444 / CCUG 56034 / CIP 105152 / NBRC 16084 / F199</strain>
    </source>
</reference>
<dbReference type="EC" id="5.2.1.8" evidence="1"/>
<dbReference type="EMBL" id="CP000248">
    <property type="protein sequence ID" value="ABD27494.1"/>
    <property type="molecule type" value="Genomic_DNA"/>
</dbReference>
<dbReference type="RefSeq" id="WP_011446698.1">
    <property type="nucleotide sequence ID" value="NC_007794.1"/>
</dbReference>
<dbReference type="SMR" id="Q2G3S9"/>
<dbReference type="STRING" id="279238.Saro_3059"/>
<dbReference type="KEGG" id="nar:Saro_3059"/>
<dbReference type="eggNOG" id="COG0544">
    <property type="taxonomic scope" value="Bacteria"/>
</dbReference>
<dbReference type="HOGENOM" id="CLU_033058_2_2_5"/>
<dbReference type="Proteomes" id="UP000009134">
    <property type="component" value="Chromosome"/>
</dbReference>
<dbReference type="GO" id="GO:0005737">
    <property type="term" value="C:cytoplasm"/>
    <property type="evidence" value="ECO:0007669"/>
    <property type="project" value="UniProtKB-SubCell"/>
</dbReference>
<dbReference type="GO" id="GO:0003755">
    <property type="term" value="F:peptidyl-prolyl cis-trans isomerase activity"/>
    <property type="evidence" value="ECO:0007669"/>
    <property type="project" value="UniProtKB-UniRule"/>
</dbReference>
<dbReference type="GO" id="GO:0044183">
    <property type="term" value="F:protein folding chaperone"/>
    <property type="evidence" value="ECO:0007669"/>
    <property type="project" value="TreeGrafter"/>
</dbReference>
<dbReference type="GO" id="GO:0043022">
    <property type="term" value="F:ribosome binding"/>
    <property type="evidence" value="ECO:0007669"/>
    <property type="project" value="TreeGrafter"/>
</dbReference>
<dbReference type="GO" id="GO:0051083">
    <property type="term" value="P:'de novo' cotranslational protein folding"/>
    <property type="evidence" value="ECO:0007669"/>
    <property type="project" value="TreeGrafter"/>
</dbReference>
<dbReference type="GO" id="GO:0051301">
    <property type="term" value="P:cell division"/>
    <property type="evidence" value="ECO:0007669"/>
    <property type="project" value="UniProtKB-KW"/>
</dbReference>
<dbReference type="GO" id="GO:0061077">
    <property type="term" value="P:chaperone-mediated protein folding"/>
    <property type="evidence" value="ECO:0007669"/>
    <property type="project" value="TreeGrafter"/>
</dbReference>
<dbReference type="GO" id="GO:0015031">
    <property type="term" value="P:protein transport"/>
    <property type="evidence" value="ECO:0007669"/>
    <property type="project" value="UniProtKB-UniRule"/>
</dbReference>
<dbReference type="GO" id="GO:0043335">
    <property type="term" value="P:protein unfolding"/>
    <property type="evidence" value="ECO:0007669"/>
    <property type="project" value="TreeGrafter"/>
</dbReference>
<dbReference type="FunFam" id="3.10.50.40:FF:000001">
    <property type="entry name" value="Trigger factor"/>
    <property type="match status" value="1"/>
</dbReference>
<dbReference type="Gene3D" id="3.10.50.40">
    <property type="match status" value="1"/>
</dbReference>
<dbReference type="Gene3D" id="3.30.70.1050">
    <property type="entry name" value="Trigger factor ribosome-binding domain"/>
    <property type="match status" value="1"/>
</dbReference>
<dbReference type="Gene3D" id="1.10.3120.10">
    <property type="entry name" value="Trigger factor, C-terminal domain"/>
    <property type="match status" value="1"/>
</dbReference>
<dbReference type="HAMAP" id="MF_00303">
    <property type="entry name" value="Trigger_factor_Tig"/>
    <property type="match status" value="1"/>
</dbReference>
<dbReference type="InterPro" id="IPR046357">
    <property type="entry name" value="PPIase_dom_sf"/>
</dbReference>
<dbReference type="InterPro" id="IPR001179">
    <property type="entry name" value="PPIase_FKBP_dom"/>
</dbReference>
<dbReference type="InterPro" id="IPR005215">
    <property type="entry name" value="Trig_fac"/>
</dbReference>
<dbReference type="InterPro" id="IPR008880">
    <property type="entry name" value="Trigger_fac_C"/>
</dbReference>
<dbReference type="InterPro" id="IPR037041">
    <property type="entry name" value="Trigger_fac_C_sf"/>
</dbReference>
<dbReference type="InterPro" id="IPR008881">
    <property type="entry name" value="Trigger_fac_ribosome-bd_bac"/>
</dbReference>
<dbReference type="InterPro" id="IPR036611">
    <property type="entry name" value="Trigger_fac_ribosome-bd_sf"/>
</dbReference>
<dbReference type="InterPro" id="IPR027304">
    <property type="entry name" value="Trigger_fact/SurA_dom_sf"/>
</dbReference>
<dbReference type="NCBIfam" id="TIGR00115">
    <property type="entry name" value="tig"/>
    <property type="match status" value="1"/>
</dbReference>
<dbReference type="PANTHER" id="PTHR30560">
    <property type="entry name" value="TRIGGER FACTOR CHAPERONE AND PEPTIDYL-PROLYL CIS/TRANS ISOMERASE"/>
    <property type="match status" value="1"/>
</dbReference>
<dbReference type="PANTHER" id="PTHR30560:SF3">
    <property type="entry name" value="TRIGGER FACTOR-LIKE PROTEIN TIG, CHLOROPLASTIC"/>
    <property type="match status" value="1"/>
</dbReference>
<dbReference type="Pfam" id="PF00254">
    <property type="entry name" value="FKBP_C"/>
    <property type="match status" value="1"/>
</dbReference>
<dbReference type="Pfam" id="PF05698">
    <property type="entry name" value="Trigger_C"/>
    <property type="match status" value="1"/>
</dbReference>
<dbReference type="Pfam" id="PF05697">
    <property type="entry name" value="Trigger_N"/>
    <property type="match status" value="1"/>
</dbReference>
<dbReference type="SUPFAM" id="SSF54534">
    <property type="entry name" value="FKBP-like"/>
    <property type="match status" value="1"/>
</dbReference>
<dbReference type="SUPFAM" id="SSF109998">
    <property type="entry name" value="Triger factor/SurA peptide-binding domain-like"/>
    <property type="match status" value="1"/>
</dbReference>
<dbReference type="SUPFAM" id="SSF102735">
    <property type="entry name" value="Trigger factor ribosome-binding domain"/>
    <property type="match status" value="1"/>
</dbReference>
<dbReference type="PROSITE" id="PS50059">
    <property type="entry name" value="FKBP_PPIASE"/>
    <property type="match status" value="1"/>
</dbReference>
<comment type="function">
    <text evidence="1">Involved in protein export. Acts as a chaperone by maintaining the newly synthesized protein in an open conformation. Functions as a peptidyl-prolyl cis-trans isomerase.</text>
</comment>
<comment type="catalytic activity">
    <reaction evidence="1">
        <text>[protein]-peptidylproline (omega=180) = [protein]-peptidylproline (omega=0)</text>
        <dbReference type="Rhea" id="RHEA:16237"/>
        <dbReference type="Rhea" id="RHEA-COMP:10747"/>
        <dbReference type="Rhea" id="RHEA-COMP:10748"/>
        <dbReference type="ChEBI" id="CHEBI:83833"/>
        <dbReference type="ChEBI" id="CHEBI:83834"/>
        <dbReference type="EC" id="5.2.1.8"/>
    </reaction>
</comment>
<comment type="subcellular location">
    <subcellularLocation>
        <location>Cytoplasm</location>
    </subcellularLocation>
    <text evidence="1">About half TF is bound to the ribosome near the polypeptide exit tunnel while the other half is free in the cytoplasm.</text>
</comment>
<comment type="domain">
    <text evidence="1">Consists of 3 domains; the N-terminus binds the ribosome, the middle domain has PPIase activity, while the C-terminus has intrinsic chaperone activity on its own.</text>
</comment>
<comment type="similarity">
    <text evidence="1">Belongs to the FKBP-type PPIase family. Tig subfamily.</text>
</comment>
<protein>
    <recommendedName>
        <fullName evidence="1">Trigger factor</fullName>
        <shortName evidence="1">TF</shortName>
        <ecNumber evidence="1">5.2.1.8</ecNumber>
    </recommendedName>
    <alternativeName>
        <fullName evidence="1">PPIase</fullName>
    </alternativeName>
</protein>
<organism>
    <name type="scientific">Novosphingobium aromaticivorans (strain ATCC 700278 / DSM 12444 / CCUG 56034 / CIP 105152 / NBRC 16084 / F199)</name>
    <dbReference type="NCBI Taxonomy" id="279238"/>
    <lineage>
        <taxon>Bacteria</taxon>
        <taxon>Pseudomonadati</taxon>
        <taxon>Pseudomonadota</taxon>
        <taxon>Alphaproteobacteria</taxon>
        <taxon>Sphingomonadales</taxon>
        <taxon>Sphingomonadaceae</taxon>
        <taxon>Novosphingobium</taxon>
    </lineage>
</organism>
<feature type="chain" id="PRO_0000256584" description="Trigger factor">
    <location>
        <begin position="1"/>
        <end position="513"/>
    </location>
</feature>
<feature type="domain" description="PPIase FKBP-type" evidence="1">
    <location>
        <begin position="164"/>
        <end position="249"/>
    </location>
</feature>
<feature type="region of interest" description="Disordered" evidence="2">
    <location>
        <begin position="436"/>
        <end position="513"/>
    </location>
</feature>
<feature type="compositionally biased region" description="Basic residues" evidence="2">
    <location>
        <begin position="452"/>
        <end position="461"/>
    </location>
</feature>
<feature type="compositionally biased region" description="Low complexity" evidence="2">
    <location>
        <begin position="489"/>
        <end position="498"/>
    </location>
</feature>
<feature type="compositionally biased region" description="Basic residues" evidence="2">
    <location>
        <begin position="501"/>
        <end position="513"/>
    </location>
</feature>
<name>TIG_NOVAD</name>
<evidence type="ECO:0000255" key="1">
    <source>
        <dbReference type="HAMAP-Rule" id="MF_00303"/>
    </source>
</evidence>
<evidence type="ECO:0000256" key="2">
    <source>
        <dbReference type="SAM" id="MobiDB-lite"/>
    </source>
</evidence>